<proteinExistence type="inferred from homology"/>
<gene>
    <name type="primary">MT-CYB</name>
    <name type="synonym">COB</name>
    <name type="synonym">CYTB</name>
    <name type="synonym">MTCYB</name>
</gene>
<sequence length="379" mass="42727">MINTRKTHPLDKIVNNMFIDLPAPSNISSWWNFGSLLGICLILQILTGLFLAMHYTADTTTAFSSVTHICRDVNYGWIIRYMHANGASMFFICLFMHVGRGLYYGSYTFLETWNIGVILLFATMATAFMGYVLPWGQMSFWGATVITNLLSAIPYIGTNLVEWIWGGFSVDKATLTRFFAFHFILPFIIAALTMVHLLFLHETGSNNPTGISSDADKIPFHPYYTIKDILGALLLILTLMLLVLFSPDLLGDPDNYTPANPLNTPPHIKPEWYFLFAYAILRSIPNKLGGVLALVLSILILILMPMLHTSKQQSMMFRPISQCLFWVLVADLLTLTWIGGQPVEHPYIIIGQLASVMYFLLILVLMPVASTIENNLLKW</sequence>
<keyword id="KW-0249">Electron transport</keyword>
<keyword id="KW-0349">Heme</keyword>
<keyword id="KW-0408">Iron</keyword>
<keyword id="KW-0472">Membrane</keyword>
<keyword id="KW-0479">Metal-binding</keyword>
<keyword id="KW-0496">Mitochondrion</keyword>
<keyword id="KW-0999">Mitochondrion inner membrane</keyword>
<keyword id="KW-0679">Respiratory chain</keyword>
<keyword id="KW-0812">Transmembrane</keyword>
<keyword id="KW-1133">Transmembrane helix</keyword>
<keyword id="KW-0813">Transport</keyword>
<keyword id="KW-0830">Ubiquinone</keyword>
<dbReference type="EMBL" id="AF022058">
    <property type="protein sequence ID" value="AAD13492.1"/>
    <property type="molecule type" value="Genomic_DNA"/>
</dbReference>
<dbReference type="SMR" id="Q9TGH6"/>
<dbReference type="GO" id="GO:0005743">
    <property type="term" value="C:mitochondrial inner membrane"/>
    <property type="evidence" value="ECO:0007669"/>
    <property type="project" value="UniProtKB-SubCell"/>
</dbReference>
<dbReference type="GO" id="GO:0045275">
    <property type="term" value="C:respiratory chain complex III"/>
    <property type="evidence" value="ECO:0007669"/>
    <property type="project" value="InterPro"/>
</dbReference>
<dbReference type="GO" id="GO:0046872">
    <property type="term" value="F:metal ion binding"/>
    <property type="evidence" value="ECO:0007669"/>
    <property type="project" value="UniProtKB-KW"/>
</dbReference>
<dbReference type="GO" id="GO:0008121">
    <property type="term" value="F:ubiquinol-cytochrome-c reductase activity"/>
    <property type="evidence" value="ECO:0007669"/>
    <property type="project" value="InterPro"/>
</dbReference>
<dbReference type="GO" id="GO:0006122">
    <property type="term" value="P:mitochondrial electron transport, ubiquinol to cytochrome c"/>
    <property type="evidence" value="ECO:0007669"/>
    <property type="project" value="TreeGrafter"/>
</dbReference>
<dbReference type="CDD" id="cd00290">
    <property type="entry name" value="cytochrome_b_C"/>
    <property type="match status" value="1"/>
</dbReference>
<dbReference type="CDD" id="cd00284">
    <property type="entry name" value="Cytochrome_b_N"/>
    <property type="match status" value="1"/>
</dbReference>
<dbReference type="FunFam" id="1.20.810.10:FF:000002">
    <property type="entry name" value="Cytochrome b"/>
    <property type="match status" value="1"/>
</dbReference>
<dbReference type="Gene3D" id="1.20.810.10">
    <property type="entry name" value="Cytochrome Bc1 Complex, Chain C"/>
    <property type="match status" value="1"/>
</dbReference>
<dbReference type="InterPro" id="IPR005798">
    <property type="entry name" value="Cyt_b/b6_C"/>
</dbReference>
<dbReference type="InterPro" id="IPR036150">
    <property type="entry name" value="Cyt_b/b6_C_sf"/>
</dbReference>
<dbReference type="InterPro" id="IPR005797">
    <property type="entry name" value="Cyt_b/b6_N"/>
</dbReference>
<dbReference type="InterPro" id="IPR027387">
    <property type="entry name" value="Cytb/b6-like_sf"/>
</dbReference>
<dbReference type="InterPro" id="IPR030689">
    <property type="entry name" value="Cytochrome_b"/>
</dbReference>
<dbReference type="InterPro" id="IPR048260">
    <property type="entry name" value="Cytochrome_b_C_euk/bac"/>
</dbReference>
<dbReference type="InterPro" id="IPR048259">
    <property type="entry name" value="Cytochrome_b_N_euk/bac"/>
</dbReference>
<dbReference type="InterPro" id="IPR016174">
    <property type="entry name" value="Di-haem_cyt_TM"/>
</dbReference>
<dbReference type="PANTHER" id="PTHR19271">
    <property type="entry name" value="CYTOCHROME B"/>
    <property type="match status" value="1"/>
</dbReference>
<dbReference type="PANTHER" id="PTHR19271:SF16">
    <property type="entry name" value="CYTOCHROME B"/>
    <property type="match status" value="1"/>
</dbReference>
<dbReference type="Pfam" id="PF00032">
    <property type="entry name" value="Cytochrom_B_C"/>
    <property type="match status" value="1"/>
</dbReference>
<dbReference type="Pfam" id="PF00033">
    <property type="entry name" value="Cytochrome_B"/>
    <property type="match status" value="1"/>
</dbReference>
<dbReference type="PIRSF" id="PIRSF038885">
    <property type="entry name" value="COB"/>
    <property type="match status" value="1"/>
</dbReference>
<dbReference type="SUPFAM" id="SSF81648">
    <property type="entry name" value="a domain/subunit of cytochrome bc1 complex (Ubiquinol-cytochrome c reductase)"/>
    <property type="match status" value="1"/>
</dbReference>
<dbReference type="SUPFAM" id="SSF81342">
    <property type="entry name" value="Transmembrane di-heme cytochromes"/>
    <property type="match status" value="1"/>
</dbReference>
<dbReference type="PROSITE" id="PS51003">
    <property type="entry name" value="CYTB_CTER"/>
    <property type="match status" value="1"/>
</dbReference>
<dbReference type="PROSITE" id="PS51002">
    <property type="entry name" value="CYTB_NTER"/>
    <property type="match status" value="1"/>
</dbReference>
<organism>
    <name type="scientific">Antilope cervicapra</name>
    <name type="common">Blackbuck</name>
    <dbReference type="NCBI Taxonomy" id="59525"/>
    <lineage>
        <taxon>Eukaryota</taxon>
        <taxon>Metazoa</taxon>
        <taxon>Chordata</taxon>
        <taxon>Craniata</taxon>
        <taxon>Vertebrata</taxon>
        <taxon>Euteleostomi</taxon>
        <taxon>Mammalia</taxon>
        <taxon>Eutheria</taxon>
        <taxon>Laurasiatheria</taxon>
        <taxon>Artiodactyla</taxon>
        <taxon>Ruminantia</taxon>
        <taxon>Pecora</taxon>
        <taxon>Bovidae</taxon>
        <taxon>Antilopinae</taxon>
        <taxon>Antilope</taxon>
    </lineage>
</organism>
<reference key="1">
    <citation type="journal article" date="1999" name="Mol. Phylogenet. Evol.">
        <title>Cytochrome b phylogeny of the family bovidae: resolution within the alcelaphini, antilopini, neotragini, and tragelaphini.</title>
        <authorList>
            <person name="Matthee C.A."/>
            <person name="Robinson T.J."/>
        </authorList>
    </citation>
    <scope>NUCLEOTIDE SEQUENCE [GENOMIC DNA]</scope>
    <source>
        <strain>Isolate Indian</strain>
    </source>
</reference>
<geneLocation type="mitochondrion"/>
<accession>Q9TGH6</accession>
<evidence type="ECO:0000250" key="1"/>
<evidence type="ECO:0000250" key="2">
    <source>
        <dbReference type="UniProtKB" id="P00157"/>
    </source>
</evidence>
<evidence type="ECO:0000255" key="3">
    <source>
        <dbReference type="PROSITE-ProRule" id="PRU00967"/>
    </source>
</evidence>
<evidence type="ECO:0000255" key="4">
    <source>
        <dbReference type="PROSITE-ProRule" id="PRU00968"/>
    </source>
</evidence>
<name>CYB_ANTCE</name>
<comment type="function">
    <text evidence="2">Component of the ubiquinol-cytochrome c reductase complex (complex III or cytochrome b-c1 complex) that is part of the mitochondrial respiratory chain. The b-c1 complex mediates electron transfer from ubiquinol to cytochrome c. Contributes to the generation of a proton gradient across the mitochondrial membrane that is then used for ATP synthesis.</text>
</comment>
<comment type="cofactor">
    <cofactor evidence="2">
        <name>heme b</name>
        <dbReference type="ChEBI" id="CHEBI:60344"/>
    </cofactor>
    <text evidence="2">Binds 2 heme b groups non-covalently.</text>
</comment>
<comment type="subunit">
    <text evidence="2">The cytochrome bc1 complex contains 11 subunits: 3 respiratory subunits (MT-CYB, CYC1 and UQCRFS1), 2 core proteins (UQCRC1 and UQCRC2) and 6 low-molecular weight proteins (UQCRH/QCR6, UQCRB/QCR7, UQCRQ/QCR8, UQCR10/QCR9, UQCR11/QCR10 and a cleavage product of UQCRFS1). This cytochrome bc1 complex then forms a dimer.</text>
</comment>
<comment type="subcellular location">
    <subcellularLocation>
        <location evidence="2">Mitochondrion inner membrane</location>
        <topology evidence="2">Multi-pass membrane protein</topology>
    </subcellularLocation>
</comment>
<comment type="miscellaneous">
    <text evidence="1">Heme 1 (or BL or b562) is low-potential and absorbs at about 562 nm, and heme 2 (or BH or b566) is high-potential and absorbs at about 566 nm.</text>
</comment>
<comment type="similarity">
    <text evidence="3 4">Belongs to the cytochrome b family.</text>
</comment>
<comment type="caution">
    <text evidence="2">The full-length protein contains only eight transmembrane helices, not nine as predicted by bioinformatics tools.</text>
</comment>
<feature type="chain" id="PRO_0000254775" description="Cytochrome b">
    <location>
        <begin position="1"/>
        <end position="379"/>
    </location>
</feature>
<feature type="transmembrane region" description="Helical" evidence="2">
    <location>
        <begin position="33"/>
        <end position="53"/>
    </location>
</feature>
<feature type="transmembrane region" description="Helical" evidence="2">
    <location>
        <begin position="77"/>
        <end position="98"/>
    </location>
</feature>
<feature type="transmembrane region" description="Helical" evidence="2">
    <location>
        <begin position="113"/>
        <end position="133"/>
    </location>
</feature>
<feature type="transmembrane region" description="Helical" evidence="2">
    <location>
        <begin position="178"/>
        <end position="198"/>
    </location>
</feature>
<feature type="transmembrane region" description="Helical" evidence="2">
    <location>
        <begin position="226"/>
        <end position="246"/>
    </location>
</feature>
<feature type="transmembrane region" description="Helical" evidence="2">
    <location>
        <begin position="288"/>
        <end position="308"/>
    </location>
</feature>
<feature type="transmembrane region" description="Helical" evidence="2">
    <location>
        <begin position="320"/>
        <end position="340"/>
    </location>
</feature>
<feature type="transmembrane region" description="Helical" evidence="2">
    <location>
        <begin position="347"/>
        <end position="367"/>
    </location>
</feature>
<feature type="binding site" description="axial binding residue" evidence="2">
    <location>
        <position position="83"/>
    </location>
    <ligand>
        <name>heme b</name>
        <dbReference type="ChEBI" id="CHEBI:60344"/>
        <label>b562</label>
    </ligand>
    <ligandPart>
        <name>Fe</name>
        <dbReference type="ChEBI" id="CHEBI:18248"/>
    </ligandPart>
</feature>
<feature type="binding site" description="axial binding residue" evidence="2">
    <location>
        <position position="97"/>
    </location>
    <ligand>
        <name>heme b</name>
        <dbReference type="ChEBI" id="CHEBI:60344"/>
        <label>b566</label>
    </ligand>
    <ligandPart>
        <name>Fe</name>
        <dbReference type="ChEBI" id="CHEBI:18248"/>
    </ligandPart>
</feature>
<feature type="binding site" description="axial binding residue" evidence="2">
    <location>
        <position position="182"/>
    </location>
    <ligand>
        <name>heme b</name>
        <dbReference type="ChEBI" id="CHEBI:60344"/>
        <label>b562</label>
    </ligand>
    <ligandPart>
        <name>Fe</name>
        <dbReference type="ChEBI" id="CHEBI:18248"/>
    </ligandPart>
</feature>
<feature type="binding site" description="axial binding residue" evidence="2">
    <location>
        <position position="196"/>
    </location>
    <ligand>
        <name>heme b</name>
        <dbReference type="ChEBI" id="CHEBI:60344"/>
        <label>b566</label>
    </ligand>
    <ligandPart>
        <name>Fe</name>
        <dbReference type="ChEBI" id="CHEBI:18248"/>
    </ligandPart>
</feature>
<feature type="binding site" evidence="2">
    <location>
        <position position="201"/>
    </location>
    <ligand>
        <name>a ubiquinone</name>
        <dbReference type="ChEBI" id="CHEBI:16389"/>
    </ligand>
</feature>
<protein>
    <recommendedName>
        <fullName>Cytochrome b</fullName>
    </recommendedName>
    <alternativeName>
        <fullName>Complex III subunit 3</fullName>
    </alternativeName>
    <alternativeName>
        <fullName>Complex III subunit III</fullName>
    </alternativeName>
    <alternativeName>
        <fullName>Cytochrome b-c1 complex subunit 3</fullName>
    </alternativeName>
    <alternativeName>
        <fullName>Ubiquinol-cytochrome-c reductase complex cytochrome b subunit</fullName>
    </alternativeName>
</protein>